<evidence type="ECO:0000255" key="1"/>
<evidence type="ECO:0000255" key="2">
    <source>
        <dbReference type="PROSITE-ProRule" id="PRU00182"/>
    </source>
</evidence>
<evidence type="ECO:0000269" key="3">
    <source>
    </source>
</evidence>
<evidence type="ECO:0000303" key="4">
    <source>
    </source>
</evidence>
<evidence type="ECO:0000305" key="5"/>
<evidence type="ECO:0000305" key="6">
    <source>
    </source>
</evidence>
<evidence type="ECO:0007744" key="7">
    <source>
        <dbReference type="PDB" id="7PZY"/>
    </source>
</evidence>
<evidence type="ECO:0007744" key="8">
    <source>
        <dbReference type="PDB" id="7Q0F"/>
    </source>
</evidence>
<evidence type="ECO:0007744" key="9">
    <source>
        <dbReference type="PDB" id="7Q0P"/>
    </source>
</evidence>
<sequence>MARGPKKHLKRLAAPSHWMLDKLSGTYAPRPSAGPHKLRESLPLVVFLRNRLKYALNGREVKAIMMQQHVQVDGKVRTDTTYPAGFMDVITLEATNEHFRLVYDVKGKFAVHRISAEEAAYKLGKVKKVQLGKKGVPYVVTHDGRTIRYPDPLIRANDTVKIDLATGKIDDFIKFDTGRLVMVTGGRNLGRVGVIVHREKHEGGFDLVHIKDALENTFVTRLSNVFVIGTEAGKPWVSLPKGKGIKLSISEERDRRRAQQGL</sequence>
<accession>A0A1D8PCI6</accession>
<feature type="chain" id="PRO_0000456542" description="Small ribosomal subunit protein eS4">
    <location>
        <begin position="1"/>
        <end position="262"/>
    </location>
</feature>
<feature type="domain" description="S4 RNA-binding" evidence="2">
    <location>
        <begin position="42"/>
        <end position="105"/>
    </location>
</feature>
<feature type="domain" description="KOW" evidence="1">
    <location>
        <begin position="178"/>
        <end position="211"/>
    </location>
</feature>
<protein>
    <recommendedName>
        <fullName evidence="4">Small ribosomal subunit protein eS4</fullName>
    </recommendedName>
    <alternativeName>
        <fullName>40S ribosomal protein S4</fullName>
    </alternativeName>
</protein>
<proteinExistence type="evidence at protein level"/>
<reference key="1">
    <citation type="journal article" date="2004" name="Proc. Natl. Acad. Sci. U.S.A.">
        <title>The diploid genome sequence of Candida albicans.</title>
        <authorList>
            <person name="Jones T."/>
            <person name="Federspiel N.A."/>
            <person name="Chibana H."/>
            <person name="Dungan J."/>
            <person name="Kalman S."/>
            <person name="Magee B.B."/>
            <person name="Newport G."/>
            <person name="Thorstenson Y.R."/>
            <person name="Agabian N."/>
            <person name="Magee P.T."/>
            <person name="Davis R.W."/>
            <person name="Scherer S."/>
        </authorList>
    </citation>
    <scope>NUCLEOTIDE SEQUENCE [LARGE SCALE GENOMIC DNA]</scope>
    <source>
        <strain>SC5314 / ATCC MYA-2876</strain>
    </source>
</reference>
<reference key="2">
    <citation type="journal article" date="2007" name="Genome Biol.">
        <title>Assembly of the Candida albicans genome into sixteen supercontigs aligned on the eight chromosomes.</title>
        <authorList>
            <person name="van het Hoog M."/>
            <person name="Rast T.J."/>
            <person name="Martchenko M."/>
            <person name="Grindle S."/>
            <person name="Dignard D."/>
            <person name="Hogues H."/>
            <person name="Cuomo C."/>
            <person name="Berriman M."/>
            <person name="Scherer S."/>
            <person name="Magee B.B."/>
            <person name="Whiteway M."/>
            <person name="Chibana H."/>
            <person name="Nantel A."/>
            <person name="Magee P.T."/>
        </authorList>
    </citation>
    <scope>GENOME REANNOTATION</scope>
    <source>
        <strain>SC5314 / ATCC MYA-2876</strain>
    </source>
</reference>
<reference key="3">
    <citation type="journal article" date="2013" name="Genome Biol.">
        <title>Assembly of a phased diploid Candida albicans genome facilitates allele-specific measurements and provides a simple model for repeat and indel structure.</title>
        <authorList>
            <person name="Muzzey D."/>
            <person name="Schwartz K."/>
            <person name="Weissman J.S."/>
            <person name="Sherlock G."/>
        </authorList>
    </citation>
    <scope>NUCLEOTIDE SEQUENCE [LARGE SCALE GENOMIC DNA]</scope>
    <scope>GENOME REANNOTATION</scope>
    <source>
        <strain>SC5314 / ATCC MYA-2876</strain>
    </source>
</reference>
<reference evidence="7 8 9" key="4">
    <citation type="journal article" date="2022" name="Sci. Adv.">
        <title>E-site drug specificity of the human pathogen Candida albicans ribosome.</title>
        <authorList>
            <person name="Zgadzay Y."/>
            <person name="Kolosova O."/>
            <person name="Stetsenko A."/>
            <person name="Wu C."/>
            <person name="Bruchlen D."/>
            <person name="Usachev K."/>
            <person name="Validov S."/>
            <person name="Jenner L."/>
            <person name="Rogachev A."/>
            <person name="Yusupova G."/>
            <person name="Sachs M.S."/>
            <person name="Guskov A."/>
            <person name="Yusupov M."/>
        </authorList>
    </citation>
    <scope>STRUCTURE BY ELECTRON MICROSCOPY (2.32 ANGSTROMS) OF THE 80S RIBOSOME</scope>
    <scope>SUBUNIT</scope>
</reference>
<comment type="function">
    <text evidence="6">Component of the ribosome, a large ribonucleoprotein complex responsible for the synthesis of proteins in the cell. The small ribosomal subunit (SSU) binds messenger RNAs (mRNAs) and translates the encoded message by selecting cognate aminoacyl-transfer RNA (tRNA) molecules. The large subunit (LSU) contains the ribosomal catalytic site termed the peptidyl transferase center (PTC), which catalyzes the formation of peptide bonds, thereby polymerizing the amino acids delivered by tRNAs into a polypeptide chain. The nascent polypeptides leave the ribosome through a tunnel in the LSU and interact with protein factors that function in enzymatic processing, targeting, and the membrane insertion of nascent chains at the exit of the ribosomal tunnel.</text>
</comment>
<comment type="subunit">
    <text evidence="3">Component of the small ribosomal subunit (PubMed:35613268). Mature ribosomes consist of a small (40S) and a large (60S) subunit (PubMed:35613268). The 40S subunit contains about 32 different proteins and 1 molecule of RNA (18S) (PubMed:35613268). The 60S subunit contains 45 different proteins and 3 molecules of RNA (25S, 5.8S and 5S) (PubMed:35613268).</text>
</comment>
<comment type="subcellular location">
    <subcellularLocation>
        <location evidence="6">Cytoplasm</location>
    </subcellularLocation>
</comment>
<comment type="similarity">
    <text evidence="5">Belongs to the eukaryotic ribosomal protein eS4 family.</text>
</comment>
<name>RS4_CANAL</name>
<organism>
    <name type="scientific">Candida albicans (strain SC5314 / ATCC MYA-2876)</name>
    <name type="common">Yeast</name>
    <dbReference type="NCBI Taxonomy" id="237561"/>
    <lineage>
        <taxon>Eukaryota</taxon>
        <taxon>Fungi</taxon>
        <taxon>Dikarya</taxon>
        <taxon>Ascomycota</taxon>
        <taxon>Saccharomycotina</taxon>
        <taxon>Pichiomycetes</taxon>
        <taxon>Debaryomycetaceae</taxon>
        <taxon>Candida/Lodderomyces clade</taxon>
        <taxon>Candida</taxon>
    </lineage>
</organism>
<dbReference type="EMBL" id="CP017623">
    <property type="protein sequence ID" value="AOW25854.1"/>
    <property type="molecule type" value="Genomic_DNA"/>
</dbReference>
<dbReference type="RefSeq" id="XP_019330612.1">
    <property type="nucleotide sequence ID" value="XM_019475067.1"/>
</dbReference>
<dbReference type="PDB" id="7PZY">
    <property type="method" value="EM"/>
    <property type="resolution" value="2.32 A"/>
    <property type="chains" value="F=1-262"/>
</dbReference>
<dbReference type="PDB" id="7Q08">
    <property type="method" value="EM"/>
    <property type="resolution" value="2.56 A"/>
    <property type="chains" value="F=1-262"/>
</dbReference>
<dbReference type="PDB" id="7Q0F">
    <property type="method" value="EM"/>
    <property type="resolution" value="2.64 A"/>
    <property type="chains" value="F=1-262"/>
</dbReference>
<dbReference type="PDB" id="7Q0P">
    <property type="method" value="EM"/>
    <property type="resolution" value="2.77 A"/>
    <property type="chains" value="F=1-262"/>
</dbReference>
<dbReference type="PDB" id="7Q0R">
    <property type="method" value="EM"/>
    <property type="resolution" value="2.67 A"/>
    <property type="chains" value="F=1-262"/>
</dbReference>
<dbReference type="PDB" id="8C3A">
    <property type="method" value="X-ray"/>
    <property type="resolution" value="3.00 A"/>
    <property type="chains" value="CR/G=1-262"/>
</dbReference>
<dbReference type="PDB" id="8CQ7">
    <property type="method" value="X-ray"/>
    <property type="resolution" value="3.20 A"/>
    <property type="chains" value="CR/G=1-262"/>
</dbReference>
<dbReference type="PDB" id="8CQW">
    <property type="method" value="X-ray"/>
    <property type="resolution" value="3.05 A"/>
    <property type="chains" value="CR/G=1-262"/>
</dbReference>
<dbReference type="PDB" id="8CRE">
    <property type="method" value="X-ray"/>
    <property type="resolution" value="3.00 A"/>
    <property type="chains" value="CR/G=1-262"/>
</dbReference>
<dbReference type="PDB" id="8OEQ">
    <property type="method" value="X-ray"/>
    <property type="resolution" value="3.30 A"/>
    <property type="chains" value="CR/G=1-262"/>
</dbReference>
<dbReference type="PDB" id="8OGJ">
    <property type="method" value="EM"/>
    <property type="resolution" value="3.10 A"/>
    <property type="chains" value="F=1-262"/>
</dbReference>
<dbReference type="PDB" id="8OH6">
    <property type="method" value="X-ray"/>
    <property type="resolution" value="3.35 A"/>
    <property type="chains" value="CR/G=1-262"/>
</dbReference>
<dbReference type="PDB" id="8OI5">
    <property type="method" value="X-ray"/>
    <property type="resolution" value="2.90 A"/>
    <property type="chains" value="CR/G=1-262"/>
</dbReference>
<dbReference type="PDB" id="8OJ3">
    <property type="method" value="X-ray"/>
    <property type="resolution" value="3.50 A"/>
    <property type="chains" value="CR/G=1-262"/>
</dbReference>
<dbReference type="PDB" id="8Q5I">
    <property type="method" value="EM"/>
    <property type="resolution" value="2.45 A"/>
    <property type="chains" value="F=1-262"/>
</dbReference>
<dbReference type="PDBsum" id="7PZY"/>
<dbReference type="PDBsum" id="7Q08"/>
<dbReference type="PDBsum" id="7Q0F"/>
<dbReference type="PDBsum" id="7Q0P"/>
<dbReference type="PDBsum" id="7Q0R"/>
<dbReference type="PDBsum" id="8C3A"/>
<dbReference type="PDBsum" id="8CQ7"/>
<dbReference type="PDBsum" id="8CQW"/>
<dbReference type="PDBsum" id="8CRE"/>
<dbReference type="PDBsum" id="8OEQ"/>
<dbReference type="PDBsum" id="8OGJ"/>
<dbReference type="PDBsum" id="8OH6"/>
<dbReference type="PDBsum" id="8OI5"/>
<dbReference type="PDBsum" id="8OJ3"/>
<dbReference type="PDBsum" id="8Q5I"/>
<dbReference type="EMDB" id="EMD-13737"/>
<dbReference type="EMDB" id="EMD-13741"/>
<dbReference type="EMDB" id="EMD-13744"/>
<dbReference type="EMDB" id="EMD-13749"/>
<dbReference type="EMDB" id="EMD-13750"/>
<dbReference type="EMDB" id="EMD-16874"/>
<dbReference type="SMR" id="A0A1D8PCI6"/>
<dbReference type="FunCoup" id="A0A1D8PCI6">
    <property type="interactions" value="1293"/>
</dbReference>
<dbReference type="STRING" id="237561.A0A1D8PCI6"/>
<dbReference type="EnsemblFungi" id="C1_01640W_A-T">
    <property type="protein sequence ID" value="C1_01640W_A-T-p1"/>
    <property type="gene ID" value="C1_01640W_A"/>
</dbReference>
<dbReference type="GeneID" id="3640195"/>
<dbReference type="KEGG" id="cal:CAALFM_C101640WA"/>
<dbReference type="CGD" id="CAL0000191446">
    <property type="gene designation" value="RPS42"/>
</dbReference>
<dbReference type="VEuPathDB" id="FungiDB:C1_01640W_A"/>
<dbReference type="InParanoid" id="A0A1D8PCI6"/>
<dbReference type="OrthoDB" id="1109245at2759"/>
<dbReference type="Proteomes" id="UP000000559">
    <property type="component" value="Chromosome 1"/>
</dbReference>
<dbReference type="GO" id="GO:0022627">
    <property type="term" value="C:cytosolic small ribosomal subunit"/>
    <property type="evidence" value="ECO:0000318"/>
    <property type="project" value="GO_Central"/>
</dbReference>
<dbReference type="GO" id="GO:0003723">
    <property type="term" value="F:RNA binding"/>
    <property type="evidence" value="ECO:0000318"/>
    <property type="project" value="GO_Central"/>
</dbReference>
<dbReference type="GO" id="GO:0019843">
    <property type="term" value="F:rRNA binding"/>
    <property type="evidence" value="ECO:0007669"/>
    <property type="project" value="UniProtKB-KW"/>
</dbReference>
<dbReference type="GO" id="GO:0003735">
    <property type="term" value="F:structural constituent of ribosome"/>
    <property type="evidence" value="ECO:0000318"/>
    <property type="project" value="GO_Central"/>
</dbReference>
<dbReference type="GO" id="GO:0006412">
    <property type="term" value="P:translation"/>
    <property type="evidence" value="ECO:0000318"/>
    <property type="project" value="GO_Central"/>
</dbReference>
<dbReference type="CDD" id="cd06087">
    <property type="entry name" value="KOW_RPS4"/>
    <property type="match status" value="1"/>
</dbReference>
<dbReference type="CDD" id="cd00165">
    <property type="entry name" value="S4"/>
    <property type="match status" value="1"/>
</dbReference>
<dbReference type="FunFam" id="2.30.30.30:FF:000005">
    <property type="entry name" value="40S ribosomal protein S4"/>
    <property type="match status" value="1"/>
</dbReference>
<dbReference type="FunFam" id="2.40.50.740:FF:000001">
    <property type="entry name" value="40S ribosomal protein S4"/>
    <property type="match status" value="1"/>
</dbReference>
<dbReference type="FunFam" id="3.10.290.10:FF:000002">
    <property type="entry name" value="40S ribosomal protein S4"/>
    <property type="match status" value="1"/>
</dbReference>
<dbReference type="Gene3D" id="2.30.30.30">
    <property type="match status" value="1"/>
</dbReference>
<dbReference type="Gene3D" id="2.40.50.740">
    <property type="match status" value="1"/>
</dbReference>
<dbReference type="Gene3D" id="3.10.290.10">
    <property type="entry name" value="RNA-binding S4 domain"/>
    <property type="match status" value="1"/>
</dbReference>
<dbReference type="HAMAP" id="MF_00485">
    <property type="entry name" value="Ribosomal_eS4"/>
    <property type="match status" value="1"/>
</dbReference>
<dbReference type="InterPro" id="IPR005824">
    <property type="entry name" value="KOW"/>
</dbReference>
<dbReference type="InterPro" id="IPR014722">
    <property type="entry name" value="Rib_uL2_dom2"/>
</dbReference>
<dbReference type="InterPro" id="IPR000876">
    <property type="entry name" value="Ribosomal_eS4"/>
</dbReference>
<dbReference type="InterPro" id="IPR032277">
    <property type="entry name" value="Ribosomal_eS4_C"/>
</dbReference>
<dbReference type="InterPro" id="IPR013845">
    <property type="entry name" value="Ribosomal_eS4_central_region"/>
</dbReference>
<dbReference type="InterPro" id="IPR038237">
    <property type="entry name" value="Ribosomal_eS4_central_sf"/>
</dbReference>
<dbReference type="InterPro" id="IPR041982">
    <property type="entry name" value="Ribosomal_eS4_KOW"/>
</dbReference>
<dbReference type="InterPro" id="IPR013843">
    <property type="entry name" value="Ribosomal_eS4_N"/>
</dbReference>
<dbReference type="InterPro" id="IPR018199">
    <property type="entry name" value="Ribosomal_eS4_N_CS"/>
</dbReference>
<dbReference type="InterPro" id="IPR002942">
    <property type="entry name" value="S4_RNA-bd"/>
</dbReference>
<dbReference type="InterPro" id="IPR036986">
    <property type="entry name" value="S4_RNA-bd_sf"/>
</dbReference>
<dbReference type="PANTHER" id="PTHR11581">
    <property type="entry name" value="30S/40S RIBOSOMAL PROTEIN S4"/>
    <property type="match status" value="1"/>
</dbReference>
<dbReference type="PANTHER" id="PTHR11581:SF0">
    <property type="entry name" value="SMALL RIBOSOMAL SUBUNIT PROTEIN ES4"/>
    <property type="match status" value="1"/>
</dbReference>
<dbReference type="Pfam" id="PF16121">
    <property type="entry name" value="40S_S4_C"/>
    <property type="match status" value="1"/>
</dbReference>
<dbReference type="Pfam" id="PF00467">
    <property type="entry name" value="KOW"/>
    <property type="match status" value="1"/>
</dbReference>
<dbReference type="Pfam" id="PF00900">
    <property type="entry name" value="Ribosomal_S4e"/>
    <property type="match status" value="1"/>
</dbReference>
<dbReference type="Pfam" id="PF08071">
    <property type="entry name" value="RS4NT"/>
    <property type="match status" value="1"/>
</dbReference>
<dbReference type="Pfam" id="PF01479">
    <property type="entry name" value="S4"/>
    <property type="match status" value="1"/>
</dbReference>
<dbReference type="PIRSF" id="PIRSF002116">
    <property type="entry name" value="Ribosomal_S4"/>
    <property type="match status" value="1"/>
</dbReference>
<dbReference type="SMART" id="SM00363">
    <property type="entry name" value="S4"/>
    <property type="match status" value="1"/>
</dbReference>
<dbReference type="PROSITE" id="PS00528">
    <property type="entry name" value="RIBOSOMAL_S4E"/>
    <property type="match status" value="1"/>
</dbReference>
<dbReference type="PROSITE" id="PS50889">
    <property type="entry name" value="S4"/>
    <property type="match status" value="1"/>
</dbReference>
<gene>
    <name type="primary">RPS42</name>
    <name type="ordered locus">orf19.3354</name>
    <name type="ORF">CAALFM_C101640WA</name>
</gene>
<keyword id="KW-0002">3D-structure</keyword>
<keyword id="KW-0963">Cytoplasm</keyword>
<keyword id="KW-1185">Reference proteome</keyword>
<keyword id="KW-0687">Ribonucleoprotein</keyword>
<keyword id="KW-0689">Ribosomal protein</keyword>
<keyword id="KW-0694">RNA-binding</keyword>
<keyword id="KW-0699">rRNA-binding</keyword>